<reference key="1">
    <citation type="submission" date="2007-04" db="EMBL/GenBank/DDBJ databases">
        <title>Genome sequence of the thermophilic hydrogen-producing bacterium Caldicellulosiruptor saccharolyticus DSM 8903.</title>
        <authorList>
            <person name="Copeland A."/>
            <person name="Lucas S."/>
            <person name="Lapidus A."/>
            <person name="Barry K."/>
            <person name="Detter J.C."/>
            <person name="Glavina del Rio T."/>
            <person name="Hammon N."/>
            <person name="Israni S."/>
            <person name="Dalin E."/>
            <person name="Tice H."/>
            <person name="Pitluck S."/>
            <person name="Kiss H."/>
            <person name="Brettin T."/>
            <person name="Bruce D."/>
            <person name="Han C."/>
            <person name="Schmutz J."/>
            <person name="Larimer F."/>
            <person name="Land M."/>
            <person name="Hauser L."/>
            <person name="Kyrpides N."/>
            <person name="Lykidis A."/>
            <person name="van de Werken H.J.G."/>
            <person name="Verhaart M.R.A."/>
            <person name="VanFossen A.L."/>
            <person name="Lewis D.L."/>
            <person name="Nichols J.D."/>
            <person name="Goorissen H.P."/>
            <person name="van Niel E.W.J."/>
            <person name="Stams F.J.M."/>
            <person name="Willquist K.U."/>
            <person name="Ward D.E."/>
            <person name="van der Oost J."/>
            <person name="Kelly R.M."/>
            <person name="Kengen S.M.W."/>
            <person name="Richardson P."/>
        </authorList>
    </citation>
    <scope>NUCLEOTIDE SEQUENCE [LARGE SCALE GENOMIC DNA]</scope>
    <source>
        <strain>ATCC 43494 / DSM 8903 / Tp8T 6331</strain>
    </source>
</reference>
<name>RLMH_CALS8</name>
<feature type="chain" id="PRO_0000366575" description="Ribosomal RNA large subunit methyltransferase H">
    <location>
        <begin position="1"/>
        <end position="154"/>
    </location>
</feature>
<feature type="binding site" evidence="1">
    <location>
        <position position="103"/>
    </location>
    <ligand>
        <name>S-adenosyl-L-methionine</name>
        <dbReference type="ChEBI" id="CHEBI:59789"/>
    </ligand>
</feature>
<feature type="binding site" evidence="1">
    <location>
        <begin position="122"/>
        <end position="127"/>
    </location>
    <ligand>
        <name>S-adenosyl-L-methionine</name>
        <dbReference type="ChEBI" id="CHEBI:59789"/>
    </ligand>
</feature>
<keyword id="KW-0963">Cytoplasm</keyword>
<keyword id="KW-0489">Methyltransferase</keyword>
<keyword id="KW-0698">rRNA processing</keyword>
<keyword id="KW-0949">S-adenosyl-L-methionine</keyword>
<keyword id="KW-0808">Transferase</keyword>
<gene>
    <name evidence="1" type="primary">rlmH</name>
    <name type="ordered locus">Csac_1529</name>
</gene>
<organism>
    <name type="scientific">Caldicellulosiruptor saccharolyticus (strain ATCC 43494 / DSM 8903 / Tp8T 6331)</name>
    <dbReference type="NCBI Taxonomy" id="351627"/>
    <lineage>
        <taxon>Bacteria</taxon>
        <taxon>Bacillati</taxon>
        <taxon>Bacillota</taxon>
        <taxon>Bacillota incertae sedis</taxon>
        <taxon>Caldicellulosiruptorales</taxon>
        <taxon>Caldicellulosiruptoraceae</taxon>
        <taxon>Caldicellulosiruptor</taxon>
    </lineage>
</organism>
<evidence type="ECO:0000255" key="1">
    <source>
        <dbReference type="HAMAP-Rule" id="MF_00658"/>
    </source>
</evidence>
<protein>
    <recommendedName>
        <fullName evidence="1">Ribosomal RNA large subunit methyltransferase H</fullName>
        <ecNumber evidence="1">2.1.1.177</ecNumber>
    </recommendedName>
    <alternativeName>
        <fullName evidence="1">23S rRNA (pseudouridine1915-N3)-methyltransferase</fullName>
    </alternativeName>
    <alternativeName>
        <fullName evidence="1">23S rRNA m3Psi1915 methyltransferase</fullName>
    </alternativeName>
    <alternativeName>
        <fullName evidence="1">rRNA (pseudouridine-N3-)-methyltransferase RlmH</fullName>
    </alternativeName>
</protein>
<accession>A4XJN7</accession>
<dbReference type="EC" id="2.1.1.177" evidence="1"/>
<dbReference type="EMBL" id="CP000679">
    <property type="protein sequence ID" value="ABP67122.1"/>
    <property type="molecule type" value="Genomic_DNA"/>
</dbReference>
<dbReference type="RefSeq" id="WP_011917057.1">
    <property type="nucleotide sequence ID" value="NC_009437.1"/>
</dbReference>
<dbReference type="SMR" id="A4XJN7"/>
<dbReference type="STRING" id="351627.Csac_1529"/>
<dbReference type="KEGG" id="csc:Csac_1529"/>
<dbReference type="eggNOG" id="COG1576">
    <property type="taxonomic scope" value="Bacteria"/>
</dbReference>
<dbReference type="HOGENOM" id="CLU_100552_0_0_9"/>
<dbReference type="OrthoDB" id="9806643at2"/>
<dbReference type="Proteomes" id="UP000000256">
    <property type="component" value="Chromosome"/>
</dbReference>
<dbReference type="GO" id="GO:0005737">
    <property type="term" value="C:cytoplasm"/>
    <property type="evidence" value="ECO:0007669"/>
    <property type="project" value="UniProtKB-SubCell"/>
</dbReference>
<dbReference type="GO" id="GO:0070038">
    <property type="term" value="F:rRNA (pseudouridine-N3-)-methyltransferase activity"/>
    <property type="evidence" value="ECO:0007669"/>
    <property type="project" value="UniProtKB-UniRule"/>
</dbReference>
<dbReference type="CDD" id="cd18081">
    <property type="entry name" value="RlmH-like"/>
    <property type="match status" value="1"/>
</dbReference>
<dbReference type="Gene3D" id="3.40.1280.10">
    <property type="match status" value="1"/>
</dbReference>
<dbReference type="HAMAP" id="MF_00658">
    <property type="entry name" value="23SrRNA_methyltr_H"/>
    <property type="match status" value="1"/>
</dbReference>
<dbReference type="InterPro" id="IPR029028">
    <property type="entry name" value="Alpha/beta_knot_MTases"/>
</dbReference>
<dbReference type="InterPro" id="IPR003742">
    <property type="entry name" value="RlmH-like"/>
</dbReference>
<dbReference type="InterPro" id="IPR029026">
    <property type="entry name" value="tRNA_m1G_MTases_N"/>
</dbReference>
<dbReference type="NCBIfam" id="NF000985">
    <property type="entry name" value="PRK00103.1-3"/>
    <property type="match status" value="1"/>
</dbReference>
<dbReference type="NCBIfam" id="NF000986">
    <property type="entry name" value="PRK00103.1-4"/>
    <property type="match status" value="1"/>
</dbReference>
<dbReference type="PANTHER" id="PTHR33603">
    <property type="entry name" value="METHYLTRANSFERASE"/>
    <property type="match status" value="1"/>
</dbReference>
<dbReference type="PANTHER" id="PTHR33603:SF1">
    <property type="entry name" value="RIBOSOMAL RNA LARGE SUBUNIT METHYLTRANSFERASE H"/>
    <property type="match status" value="1"/>
</dbReference>
<dbReference type="Pfam" id="PF02590">
    <property type="entry name" value="SPOUT_MTase"/>
    <property type="match status" value="1"/>
</dbReference>
<dbReference type="PIRSF" id="PIRSF004505">
    <property type="entry name" value="MT_bac"/>
    <property type="match status" value="1"/>
</dbReference>
<dbReference type="SUPFAM" id="SSF75217">
    <property type="entry name" value="alpha/beta knot"/>
    <property type="match status" value="1"/>
</dbReference>
<proteinExistence type="inferred from homology"/>
<sequence length="154" mass="18090">MIKVICVGTIKERYFKEAAEEYKKRLSRWTKIEEIEIKEEDENKYRNVEMLLKKEAEKILKHIKEGQYVVVFDINGTQLSSEEFAELLDRKVSKGEEIVFVIGGSNGLADAIKKRANLLISFSKLTFPHQLFRILVYEQIYRGFTIIKGIKYHK</sequence>
<comment type="function">
    <text evidence="1">Specifically methylates the pseudouridine at position 1915 (m3Psi1915) in 23S rRNA.</text>
</comment>
<comment type="catalytic activity">
    <reaction evidence="1">
        <text>pseudouridine(1915) in 23S rRNA + S-adenosyl-L-methionine = N(3)-methylpseudouridine(1915) in 23S rRNA + S-adenosyl-L-homocysteine + H(+)</text>
        <dbReference type="Rhea" id="RHEA:42752"/>
        <dbReference type="Rhea" id="RHEA-COMP:10221"/>
        <dbReference type="Rhea" id="RHEA-COMP:10222"/>
        <dbReference type="ChEBI" id="CHEBI:15378"/>
        <dbReference type="ChEBI" id="CHEBI:57856"/>
        <dbReference type="ChEBI" id="CHEBI:59789"/>
        <dbReference type="ChEBI" id="CHEBI:65314"/>
        <dbReference type="ChEBI" id="CHEBI:74486"/>
        <dbReference type="EC" id="2.1.1.177"/>
    </reaction>
</comment>
<comment type="subunit">
    <text evidence="1">Homodimer.</text>
</comment>
<comment type="subcellular location">
    <subcellularLocation>
        <location evidence="1">Cytoplasm</location>
    </subcellularLocation>
</comment>
<comment type="similarity">
    <text evidence="1">Belongs to the RNA methyltransferase RlmH family.</text>
</comment>